<dbReference type="EMBL" id="AY189824">
    <property type="protein sequence ID" value="AAO34715.1"/>
    <property type="molecule type" value="mRNA"/>
</dbReference>
<dbReference type="SMR" id="P59704"/>
<dbReference type="MEROPS" id="I33.002"/>
<dbReference type="GO" id="GO:0005576">
    <property type="term" value="C:extracellular region"/>
    <property type="evidence" value="ECO:0007669"/>
    <property type="project" value="UniProtKB-SubCell"/>
</dbReference>
<dbReference type="GO" id="GO:0019828">
    <property type="term" value="F:aspartic-type endopeptidase inhibitor activity"/>
    <property type="evidence" value="ECO:0007669"/>
    <property type="project" value="UniProtKB-KW"/>
</dbReference>
<dbReference type="CDD" id="cd00225">
    <property type="entry name" value="API3"/>
    <property type="match status" value="1"/>
</dbReference>
<dbReference type="Gene3D" id="3.30.1120.50">
    <property type="entry name" value="Pepsin inhibitor-3"/>
    <property type="match status" value="2"/>
</dbReference>
<dbReference type="InterPro" id="IPR010480">
    <property type="entry name" value="Pepsin-I3"/>
</dbReference>
<dbReference type="InterPro" id="IPR038412">
    <property type="entry name" value="Pepsin-I3_sf"/>
</dbReference>
<dbReference type="InterPro" id="IPR051901">
    <property type="entry name" value="Protease_Inhibitor_I33"/>
</dbReference>
<dbReference type="PANTHER" id="PTHR37969">
    <property type="entry name" value="PROTEIN CBG07421-RELATED"/>
    <property type="match status" value="1"/>
</dbReference>
<dbReference type="PANTHER" id="PTHR37969:SF1">
    <property type="entry name" value="PROTEIN CBG13105"/>
    <property type="match status" value="1"/>
</dbReference>
<dbReference type="Pfam" id="PF06394">
    <property type="entry name" value="Pepsin-I3"/>
    <property type="match status" value="2"/>
</dbReference>
<dbReference type="SUPFAM" id="SSF55149">
    <property type="entry name" value="Pepsin inhibitor-3"/>
    <property type="match status" value="1"/>
</dbReference>
<protein>
    <recommendedName>
        <fullName>Aspartyl protease inhibitor</fullName>
    </recommendedName>
    <alternativeName>
        <fullName>Tco-API-1</fullName>
    </alternativeName>
</protein>
<comment type="function">
    <text>Aspartyl protease inhibitor.</text>
</comment>
<comment type="subcellular location">
    <subcellularLocation>
        <location evidence="4">Secreted</location>
    </subcellularLocation>
</comment>
<comment type="allergen">
    <text>Causes an allergic reaction in human.</text>
</comment>
<comment type="similarity">
    <text evidence="4">Belongs to the protease inhibitor I33 family.</text>
</comment>
<organism>
    <name type="scientific">Trichostrongylus colubriformis</name>
    <name type="common">Black scour worm</name>
    <dbReference type="NCBI Taxonomy" id="6319"/>
    <lineage>
        <taxon>Eukaryota</taxon>
        <taxon>Metazoa</taxon>
        <taxon>Ecdysozoa</taxon>
        <taxon>Nematoda</taxon>
        <taxon>Chromadorea</taxon>
        <taxon>Rhabditida</taxon>
        <taxon>Rhabditina</taxon>
        <taxon>Rhabditomorpha</taxon>
        <taxon>Strongyloidea</taxon>
        <taxon>Trichostrongylidae</taxon>
        <taxon>Trichostrongylus</taxon>
    </lineage>
</organism>
<sequence>MKLIELCVLCAIAFAAPRQKRLTVGTIAVTGGVGGASGCVVTGNVLYANGFRLRELSASEQQELTNYEKQVAEYKASVKQILKERQEKLKSRMSGKKEEKAAVTSTKDEDLPKPPQKPSFCTEDDTTQFYFDGCMVQGNKVYVGNTFARDLDQNEIEELKEFEKKQTVYQEYVQKQIQQQVSNLFGGADFFSSFFGDAKDQTTTTVAPVLPEDAPEQPAVPNFCTRIY</sequence>
<feature type="signal peptide" evidence="2">
    <location>
        <begin position="1"/>
        <end position="15"/>
    </location>
</feature>
<feature type="chain" id="PRO_0000002400" description="Aspartyl protease inhibitor">
    <location>
        <begin position="16"/>
        <end position="228"/>
    </location>
</feature>
<feature type="region of interest" description="Disordered" evidence="3">
    <location>
        <begin position="88"/>
        <end position="119"/>
    </location>
</feature>
<feature type="compositionally biased region" description="Basic and acidic residues" evidence="3">
    <location>
        <begin position="88"/>
        <end position="112"/>
    </location>
</feature>
<feature type="disulfide bond" evidence="1">
    <location>
        <begin position="134"/>
        <end position="224"/>
    </location>
</feature>
<reference key="1">
    <citation type="journal article" date="2003" name="Int. J. Parasitol.">
        <title>Identification and characterisation of an aspartyl protease inhibitor homologue as a major allergen of Trichostrongylus colubriformis.</title>
        <authorList>
            <person name="Shaw R.J."/>
            <person name="McNeill M.M."/>
            <person name="Maass D.R."/>
            <person name="Hein W.R."/>
            <person name="Barber T.K."/>
            <person name="Wheeler M."/>
            <person name="Morris C.A."/>
            <person name="Shoemaker C.B."/>
        </authorList>
    </citation>
    <scope>NUCLEOTIDE SEQUENCE [MRNA]</scope>
</reference>
<proteinExistence type="evidence at protein level"/>
<name>API_TRICO</name>
<evidence type="ECO:0000250" key="1"/>
<evidence type="ECO:0000255" key="2"/>
<evidence type="ECO:0000256" key="3">
    <source>
        <dbReference type="SAM" id="MobiDB-lite"/>
    </source>
</evidence>
<evidence type="ECO:0000305" key="4"/>
<accession>P59704</accession>
<keyword id="KW-0020">Allergen</keyword>
<keyword id="KW-0062">Aspartic protease inhibitor</keyword>
<keyword id="KW-1015">Disulfide bond</keyword>
<keyword id="KW-0646">Protease inhibitor</keyword>
<keyword id="KW-0964">Secreted</keyword>
<keyword id="KW-0732">Signal</keyword>